<accession>B5FPS9</accession>
<name>TPIS_SALDC</name>
<feature type="chain" id="PRO_1000096526" description="Triosephosphate isomerase">
    <location>
        <begin position="1"/>
        <end position="255"/>
    </location>
</feature>
<feature type="active site" description="Electrophile" evidence="1">
    <location>
        <position position="95"/>
    </location>
</feature>
<feature type="active site" description="Proton acceptor" evidence="1">
    <location>
        <position position="167"/>
    </location>
</feature>
<feature type="binding site" evidence="1">
    <location>
        <begin position="9"/>
        <end position="11"/>
    </location>
    <ligand>
        <name>substrate</name>
    </ligand>
</feature>
<feature type="binding site" evidence="1">
    <location>
        <position position="173"/>
    </location>
    <ligand>
        <name>substrate</name>
    </ligand>
</feature>
<feature type="binding site" evidence="1">
    <location>
        <position position="212"/>
    </location>
    <ligand>
        <name>substrate</name>
    </ligand>
</feature>
<feature type="binding site" evidence="1">
    <location>
        <begin position="233"/>
        <end position="234"/>
    </location>
    <ligand>
        <name>substrate</name>
    </ligand>
</feature>
<dbReference type="EC" id="5.3.1.1" evidence="1"/>
<dbReference type="EMBL" id="CP001144">
    <property type="protein sequence ID" value="ACH76366.1"/>
    <property type="molecule type" value="Genomic_DNA"/>
</dbReference>
<dbReference type="RefSeq" id="WP_001216335.1">
    <property type="nucleotide sequence ID" value="NC_011205.1"/>
</dbReference>
<dbReference type="SMR" id="B5FPS9"/>
<dbReference type="KEGG" id="sed:SeD_A4480"/>
<dbReference type="HOGENOM" id="CLU_024251_2_1_6"/>
<dbReference type="UniPathway" id="UPA00109">
    <property type="reaction ID" value="UER00189"/>
</dbReference>
<dbReference type="UniPathway" id="UPA00138"/>
<dbReference type="Proteomes" id="UP000008322">
    <property type="component" value="Chromosome"/>
</dbReference>
<dbReference type="GO" id="GO:0005829">
    <property type="term" value="C:cytosol"/>
    <property type="evidence" value="ECO:0007669"/>
    <property type="project" value="TreeGrafter"/>
</dbReference>
<dbReference type="GO" id="GO:0004807">
    <property type="term" value="F:triose-phosphate isomerase activity"/>
    <property type="evidence" value="ECO:0007669"/>
    <property type="project" value="UniProtKB-UniRule"/>
</dbReference>
<dbReference type="GO" id="GO:0006094">
    <property type="term" value="P:gluconeogenesis"/>
    <property type="evidence" value="ECO:0007669"/>
    <property type="project" value="UniProtKB-UniRule"/>
</dbReference>
<dbReference type="GO" id="GO:0046166">
    <property type="term" value="P:glyceraldehyde-3-phosphate biosynthetic process"/>
    <property type="evidence" value="ECO:0007669"/>
    <property type="project" value="TreeGrafter"/>
</dbReference>
<dbReference type="GO" id="GO:0019563">
    <property type="term" value="P:glycerol catabolic process"/>
    <property type="evidence" value="ECO:0007669"/>
    <property type="project" value="TreeGrafter"/>
</dbReference>
<dbReference type="GO" id="GO:0006096">
    <property type="term" value="P:glycolytic process"/>
    <property type="evidence" value="ECO:0007669"/>
    <property type="project" value="UniProtKB-UniRule"/>
</dbReference>
<dbReference type="CDD" id="cd00311">
    <property type="entry name" value="TIM"/>
    <property type="match status" value="1"/>
</dbReference>
<dbReference type="FunFam" id="3.20.20.70:FF:000020">
    <property type="entry name" value="Triosephosphate isomerase"/>
    <property type="match status" value="1"/>
</dbReference>
<dbReference type="Gene3D" id="3.20.20.70">
    <property type="entry name" value="Aldolase class I"/>
    <property type="match status" value="1"/>
</dbReference>
<dbReference type="HAMAP" id="MF_00147_B">
    <property type="entry name" value="TIM_B"/>
    <property type="match status" value="1"/>
</dbReference>
<dbReference type="InterPro" id="IPR013785">
    <property type="entry name" value="Aldolase_TIM"/>
</dbReference>
<dbReference type="InterPro" id="IPR035990">
    <property type="entry name" value="TIM_sf"/>
</dbReference>
<dbReference type="InterPro" id="IPR022896">
    <property type="entry name" value="TrioseP_Isoase_bac/euk"/>
</dbReference>
<dbReference type="InterPro" id="IPR000652">
    <property type="entry name" value="Triosephosphate_isomerase"/>
</dbReference>
<dbReference type="InterPro" id="IPR020861">
    <property type="entry name" value="Triosephosphate_isomerase_AS"/>
</dbReference>
<dbReference type="NCBIfam" id="TIGR00419">
    <property type="entry name" value="tim"/>
    <property type="match status" value="1"/>
</dbReference>
<dbReference type="PANTHER" id="PTHR21139">
    <property type="entry name" value="TRIOSEPHOSPHATE ISOMERASE"/>
    <property type="match status" value="1"/>
</dbReference>
<dbReference type="PANTHER" id="PTHR21139:SF42">
    <property type="entry name" value="TRIOSEPHOSPHATE ISOMERASE"/>
    <property type="match status" value="1"/>
</dbReference>
<dbReference type="Pfam" id="PF00121">
    <property type="entry name" value="TIM"/>
    <property type="match status" value="1"/>
</dbReference>
<dbReference type="SUPFAM" id="SSF51351">
    <property type="entry name" value="Triosephosphate isomerase (TIM)"/>
    <property type="match status" value="1"/>
</dbReference>
<dbReference type="PROSITE" id="PS00171">
    <property type="entry name" value="TIM_1"/>
    <property type="match status" value="1"/>
</dbReference>
<dbReference type="PROSITE" id="PS51440">
    <property type="entry name" value="TIM_2"/>
    <property type="match status" value="1"/>
</dbReference>
<evidence type="ECO:0000255" key="1">
    <source>
        <dbReference type="HAMAP-Rule" id="MF_00147"/>
    </source>
</evidence>
<sequence>MRHPLVMGNWKLNGSRHMVNELVANLRKELAGVAGCDVAIAPPEMYIDLAKRAAAGSHIMLGAQNVDLNLSGAFTGETSAEMLKDIGAQYIIIGHSERRTYHKESDELIAKKFAVLKEQGLTPVLCIGETEAENEAGKTEEVCARQIDAVLKTQGAAAFEGAVIAYEPVWAIGTGKSATPAQAQAVHKFIRDHIAKADAKIAEQVIIQYGGSVNASNAAELFAQPDIDGALVGGASLKADAFAVIVKAAEAAKQA</sequence>
<proteinExistence type="inferred from homology"/>
<keyword id="KW-0963">Cytoplasm</keyword>
<keyword id="KW-0312">Gluconeogenesis</keyword>
<keyword id="KW-0324">Glycolysis</keyword>
<keyword id="KW-0413">Isomerase</keyword>
<protein>
    <recommendedName>
        <fullName evidence="1">Triosephosphate isomerase</fullName>
        <shortName evidence="1">TIM</shortName>
        <shortName evidence="1">TPI</shortName>
        <ecNumber evidence="1">5.3.1.1</ecNumber>
    </recommendedName>
    <alternativeName>
        <fullName evidence="1">Triose-phosphate isomerase</fullName>
    </alternativeName>
</protein>
<comment type="function">
    <text evidence="1">Involved in the gluconeogenesis. Catalyzes stereospecifically the conversion of dihydroxyacetone phosphate (DHAP) to D-glyceraldehyde-3-phosphate (G3P).</text>
</comment>
<comment type="catalytic activity">
    <reaction evidence="1">
        <text>D-glyceraldehyde 3-phosphate = dihydroxyacetone phosphate</text>
        <dbReference type="Rhea" id="RHEA:18585"/>
        <dbReference type="ChEBI" id="CHEBI:57642"/>
        <dbReference type="ChEBI" id="CHEBI:59776"/>
        <dbReference type="EC" id="5.3.1.1"/>
    </reaction>
</comment>
<comment type="pathway">
    <text evidence="1">Carbohydrate biosynthesis; gluconeogenesis.</text>
</comment>
<comment type="pathway">
    <text evidence="1">Carbohydrate degradation; glycolysis; D-glyceraldehyde 3-phosphate from glycerone phosphate: step 1/1.</text>
</comment>
<comment type="subunit">
    <text evidence="1">Homodimer.</text>
</comment>
<comment type="subcellular location">
    <subcellularLocation>
        <location evidence="1">Cytoplasm</location>
    </subcellularLocation>
</comment>
<comment type="similarity">
    <text evidence="1">Belongs to the triosephosphate isomerase family.</text>
</comment>
<reference key="1">
    <citation type="journal article" date="2011" name="J. Bacteriol.">
        <title>Comparative genomics of 28 Salmonella enterica isolates: evidence for CRISPR-mediated adaptive sublineage evolution.</title>
        <authorList>
            <person name="Fricke W.F."/>
            <person name="Mammel M.K."/>
            <person name="McDermott P.F."/>
            <person name="Tartera C."/>
            <person name="White D.G."/>
            <person name="Leclerc J.E."/>
            <person name="Ravel J."/>
            <person name="Cebula T.A."/>
        </authorList>
    </citation>
    <scope>NUCLEOTIDE SEQUENCE [LARGE SCALE GENOMIC DNA]</scope>
    <source>
        <strain>CT_02021853</strain>
    </source>
</reference>
<gene>
    <name evidence="1" type="primary">tpiA</name>
    <name type="ordered locus">SeD_A4480</name>
</gene>
<organism>
    <name type="scientific">Salmonella dublin (strain CT_02021853)</name>
    <dbReference type="NCBI Taxonomy" id="439851"/>
    <lineage>
        <taxon>Bacteria</taxon>
        <taxon>Pseudomonadati</taxon>
        <taxon>Pseudomonadota</taxon>
        <taxon>Gammaproteobacteria</taxon>
        <taxon>Enterobacterales</taxon>
        <taxon>Enterobacteriaceae</taxon>
        <taxon>Salmonella</taxon>
    </lineage>
</organism>